<name>BTD_HUMAN</name>
<feature type="signal peptide">
    <location>
        <begin position="1"/>
        <end position="41"/>
    </location>
</feature>
<feature type="chain" id="PRO_0000019707" description="Biotinidase">
    <location>
        <begin position="42"/>
        <end position="543"/>
    </location>
</feature>
<feature type="domain" description="CN hydrolase" evidence="2">
    <location>
        <begin position="72"/>
        <end position="351"/>
    </location>
</feature>
<feature type="active site" description="Proton acceptor" evidence="2">
    <location>
        <position position="112"/>
    </location>
</feature>
<feature type="active site" description="Proton donor" evidence="2">
    <location>
        <position position="212"/>
    </location>
</feature>
<feature type="active site" description="Nucleophile" evidence="2">
    <location>
        <position position="245"/>
    </location>
</feature>
<feature type="glycosylation site" description="N-linked (GlcNAc...) asparagine" evidence="4 6">
    <location>
        <position position="119"/>
    </location>
</feature>
<feature type="glycosylation site" description="N-linked (GlcNAc...) (complex) asparagine" evidence="4 5 6">
    <location>
        <position position="150"/>
    </location>
</feature>
<feature type="glycosylation site" description="N-linked (GlcNAc...) asparagine" evidence="4">
    <location>
        <position position="203"/>
    </location>
</feature>
<feature type="glycosylation site" description="N-linked (GlcNAc...) asparagine" evidence="4 6">
    <location>
        <position position="349"/>
    </location>
</feature>
<feature type="glycosylation site" description="N-linked (GlcNAc...) asparagine" evidence="4 6">
    <location>
        <position position="402"/>
    </location>
</feature>
<feature type="glycosylation site" description="N-linked (GlcNAc...) asparagine" evidence="1">
    <location>
        <position position="489"/>
    </location>
</feature>
<feature type="splice variant" id="VSP_055921" description="In isoform 4." evidence="9">
    <location>
        <begin position="1"/>
        <end position="20"/>
    </location>
</feature>
<feature type="splice variant" id="VSP_054925" description="In isoform 2." evidence="9">
    <original>MAHAHIQGGRRAKS</original>
    <variation>MARKETQLIIKMNHLA</variation>
    <location>
        <begin position="1"/>
        <end position="14"/>
    </location>
</feature>
<feature type="splice variant" id="VSP_054926" description="In isoform 3." evidence="9">
    <original>MAHAHIQGGRRAK</original>
    <variation>MPEGGGTSRRLLPMQ</variation>
    <location>
        <begin position="1"/>
        <end position="13"/>
    </location>
</feature>
<feature type="sequence variant" id="VAR_005113" description="In BTD deficiency; dbSNP:rs397514355." evidence="8">
    <original>F</original>
    <variation>V</variation>
    <location>
        <position position="128"/>
    </location>
</feature>
<feature type="sequence variant" id="VAR_005114" description="In BTD deficiency; dbSNP:rs13073139." evidence="3 8">
    <original>A</original>
    <variation>T</variation>
    <location>
        <position position="171"/>
    </location>
</feature>
<feature type="sequence variant" id="VAR_005115" description="In BTD deficiency; dbSNP:rs397514380." evidence="8">
    <original>D</original>
    <variation>Y</variation>
    <location>
        <position position="228"/>
    </location>
</feature>
<feature type="sequence variant" id="VAR_005116" description="In BTD deficiency; partial; dbSNP:rs397507176." evidence="8">
    <original>H</original>
    <variation>R</variation>
    <location>
        <position position="323"/>
    </location>
</feature>
<feature type="sequence variant" id="VAR_056238" description="In dbSNP:rs35034250.">
    <original>P</original>
    <variation>S</variation>
    <location>
        <position position="391"/>
    </location>
</feature>
<feature type="sequence variant" id="VAR_005117" description="In BTD deficiency; profound and partial; 52% decrease in biotinyl-transferase activity; dbSNP:rs13078881." evidence="3 8">
    <original>D</original>
    <variation>H</variation>
    <location>
        <position position="444"/>
    </location>
</feature>
<feature type="sequence variant" id="VAR_005118" description="In BTD deficiency; partial; dbSNP:rs397514419." evidence="8">
    <original>G</original>
    <variation>D</variation>
    <location>
        <position position="451"/>
    </location>
</feature>
<feature type="sequence variant" id="VAR_005119" description="In BTD deficiency; dbSNP:rs80338685." evidence="8">
    <original>Q</original>
    <variation>H</variation>
    <location>
        <position position="456"/>
    </location>
</feature>
<feature type="sequence variant" id="VAR_005120" description="In BTD deficiency; dbSNP:rs104893688." evidence="8">
    <original>T</original>
    <variation>M</variation>
    <location>
        <position position="532"/>
    </location>
</feature>
<feature type="sequence variant" id="VAR_005121" description="In BTD deficiency; not detectable protein levels; loss of biotinyl-transferase activity; dbSNP:rs80338686." evidence="7 8">
    <original>R</original>
    <variation>C</variation>
    <location>
        <position position="538"/>
    </location>
</feature>
<feature type="sequence conflict" description="In Ref. 3; BAH13565." evidence="10" ref="3">
    <original>H</original>
    <variation>Y</variation>
    <location>
        <position position="379"/>
    </location>
</feature>
<accession>P43251</accession>
<accession>A6NHF2</accession>
<accession>B2R865</accession>
<accession>B4DFX1</accession>
<accession>B4DLJ9</accession>
<accession>B7Z7C9</accession>
<accession>F8W1Q3</accession>
<accession>Q96EM9</accession>
<evidence type="ECO:0000255" key="1"/>
<evidence type="ECO:0000255" key="2">
    <source>
        <dbReference type="PROSITE-ProRule" id="PRU00054"/>
    </source>
</evidence>
<evidence type="ECO:0000269" key="3">
    <source>
    </source>
</evidence>
<evidence type="ECO:0000269" key="4">
    <source>
    </source>
</evidence>
<evidence type="ECO:0000269" key="5">
    <source>
    </source>
</evidence>
<evidence type="ECO:0000269" key="6">
    <source>
    </source>
</evidence>
<evidence type="ECO:0000269" key="7">
    <source>
    </source>
</evidence>
<evidence type="ECO:0000269" key="8">
    <source>
    </source>
</evidence>
<evidence type="ECO:0000303" key="9">
    <source>
    </source>
</evidence>
<evidence type="ECO:0000305" key="10"/>
<evidence type="ECO:0000305" key="11">
    <source>
    </source>
</evidence>
<evidence type="ECO:0000305" key="12">
    <source>
    </source>
</evidence>
<evidence type="ECO:0000312" key="13">
    <source>
        <dbReference type="HGNC" id="HGNC:1122"/>
    </source>
</evidence>
<protein>
    <recommendedName>
        <fullName evidence="10">Biotinidase</fullName>
        <shortName>Biotinase</shortName>
        <ecNumber evidence="11 12">3.5.1.12</ecNumber>
    </recommendedName>
</protein>
<organism>
    <name type="scientific">Homo sapiens</name>
    <name type="common">Human</name>
    <dbReference type="NCBI Taxonomy" id="9606"/>
    <lineage>
        <taxon>Eukaryota</taxon>
        <taxon>Metazoa</taxon>
        <taxon>Chordata</taxon>
        <taxon>Craniata</taxon>
        <taxon>Vertebrata</taxon>
        <taxon>Euteleostomi</taxon>
        <taxon>Mammalia</taxon>
        <taxon>Eutheria</taxon>
        <taxon>Euarchontoglires</taxon>
        <taxon>Primates</taxon>
        <taxon>Haplorrhini</taxon>
        <taxon>Catarrhini</taxon>
        <taxon>Hominidae</taxon>
        <taxon>Homo</taxon>
    </lineage>
</organism>
<reference key="1">
    <citation type="journal article" date="1994" name="J. Biol. Chem.">
        <title>Human serum biotinidase. cDNA cloning, sequence, and characterization.</title>
        <authorList>
            <person name="Cole H."/>
            <person name="Reynolds T.R."/>
            <person name="Lockyer J.M."/>
            <person name="Buck G.A."/>
            <person name="Denson T."/>
            <person name="Spence J.E."/>
            <person name="Hymes J."/>
            <person name="Wolf B."/>
        </authorList>
    </citation>
    <scope>NUCLEOTIDE SEQUENCE [MRNA] (ISOFORM 1)</scope>
    <scope>PARTIAL PROTEIN SEQUENCE</scope>
    <source>
        <tissue>Liver</tissue>
    </source>
</reference>
<reference key="2">
    <citation type="journal article" date="1998" name="Mamm. Genome">
        <title>Structure of the human biotinidase gene.</title>
        <authorList>
            <person name="Knight H.C."/>
            <person name="Reynolds T.R."/>
            <person name="Meyers G.A."/>
            <person name="Pomponio R.J."/>
            <person name="Buck G.A."/>
            <person name="Wolf B."/>
        </authorList>
    </citation>
    <scope>NUCLEOTIDE SEQUENCE [GENOMIC DNA]</scope>
</reference>
<reference key="3">
    <citation type="journal article" date="2004" name="Nat. Genet.">
        <title>Complete sequencing and characterization of 21,243 full-length human cDNAs.</title>
        <authorList>
            <person name="Ota T."/>
            <person name="Suzuki Y."/>
            <person name="Nishikawa T."/>
            <person name="Otsuki T."/>
            <person name="Sugiyama T."/>
            <person name="Irie R."/>
            <person name="Wakamatsu A."/>
            <person name="Hayashi K."/>
            <person name="Sato H."/>
            <person name="Nagai K."/>
            <person name="Kimura K."/>
            <person name="Makita H."/>
            <person name="Sekine M."/>
            <person name="Obayashi M."/>
            <person name="Nishi T."/>
            <person name="Shibahara T."/>
            <person name="Tanaka T."/>
            <person name="Ishii S."/>
            <person name="Yamamoto J."/>
            <person name="Saito K."/>
            <person name="Kawai Y."/>
            <person name="Isono Y."/>
            <person name="Nakamura Y."/>
            <person name="Nagahari K."/>
            <person name="Murakami K."/>
            <person name="Yasuda T."/>
            <person name="Iwayanagi T."/>
            <person name="Wagatsuma M."/>
            <person name="Shiratori A."/>
            <person name="Sudo H."/>
            <person name="Hosoiri T."/>
            <person name="Kaku Y."/>
            <person name="Kodaira H."/>
            <person name="Kondo H."/>
            <person name="Sugawara M."/>
            <person name="Takahashi M."/>
            <person name="Kanda K."/>
            <person name="Yokoi T."/>
            <person name="Furuya T."/>
            <person name="Kikkawa E."/>
            <person name="Omura Y."/>
            <person name="Abe K."/>
            <person name="Kamihara K."/>
            <person name="Katsuta N."/>
            <person name="Sato K."/>
            <person name="Tanikawa M."/>
            <person name="Yamazaki M."/>
            <person name="Ninomiya K."/>
            <person name="Ishibashi T."/>
            <person name="Yamashita H."/>
            <person name="Murakawa K."/>
            <person name="Fujimori K."/>
            <person name="Tanai H."/>
            <person name="Kimata M."/>
            <person name="Watanabe M."/>
            <person name="Hiraoka S."/>
            <person name="Chiba Y."/>
            <person name="Ishida S."/>
            <person name="Ono Y."/>
            <person name="Takiguchi S."/>
            <person name="Watanabe S."/>
            <person name="Yosida M."/>
            <person name="Hotuta T."/>
            <person name="Kusano J."/>
            <person name="Kanehori K."/>
            <person name="Takahashi-Fujii A."/>
            <person name="Hara H."/>
            <person name="Tanase T.-O."/>
            <person name="Nomura Y."/>
            <person name="Togiya S."/>
            <person name="Komai F."/>
            <person name="Hara R."/>
            <person name="Takeuchi K."/>
            <person name="Arita M."/>
            <person name="Imose N."/>
            <person name="Musashino K."/>
            <person name="Yuuki H."/>
            <person name="Oshima A."/>
            <person name="Sasaki N."/>
            <person name="Aotsuka S."/>
            <person name="Yoshikawa Y."/>
            <person name="Matsunawa H."/>
            <person name="Ichihara T."/>
            <person name="Shiohata N."/>
            <person name="Sano S."/>
            <person name="Moriya S."/>
            <person name="Momiyama H."/>
            <person name="Satoh N."/>
            <person name="Takami S."/>
            <person name="Terashima Y."/>
            <person name="Suzuki O."/>
            <person name="Nakagawa S."/>
            <person name="Senoh A."/>
            <person name="Mizoguchi H."/>
            <person name="Goto Y."/>
            <person name="Shimizu F."/>
            <person name="Wakebe H."/>
            <person name="Hishigaki H."/>
            <person name="Watanabe T."/>
            <person name="Sugiyama A."/>
            <person name="Takemoto M."/>
            <person name="Kawakami B."/>
            <person name="Yamazaki M."/>
            <person name="Watanabe K."/>
            <person name="Kumagai A."/>
            <person name="Itakura S."/>
            <person name="Fukuzumi Y."/>
            <person name="Fujimori Y."/>
            <person name="Komiyama M."/>
            <person name="Tashiro H."/>
            <person name="Tanigami A."/>
            <person name="Fujiwara T."/>
            <person name="Ono T."/>
            <person name="Yamada K."/>
            <person name="Fujii Y."/>
            <person name="Ozaki K."/>
            <person name="Hirao M."/>
            <person name="Ohmori Y."/>
            <person name="Kawabata A."/>
            <person name="Hikiji T."/>
            <person name="Kobatake N."/>
            <person name="Inagaki H."/>
            <person name="Ikema Y."/>
            <person name="Okamoto S."/>
            <person name="Okitani R."/>
            <person name="Kawakami T."/>
            <person name="Noguchi S."/>
            <person name="Itoh T."/>
            <person name="Shigeta K."/>
            <person name="Senba T."/>
            <person name="Matsumura K."/>
            <person name="Nakajima Y."/>
            <person name="Mizuno T."/>
            <person name="Morinaga M."/>
            <person name="Sasaki M."/>
            <person name="Togashi T."/>
            <person name="Oyama M."/>
            <person name="Hata H."/>
            <person name="Watanabe M."/>
            <person name="Komatsu T."/>
            <person name="Mizushima-Sugano J."/>
            <person name="Satoh T."/>
            <person name="Shirai Y."/>
            <person name="Takahashi Y."/>
            <person name="Nakagawa K."/>
            <person name="Okumura K."/>
            <person name="Nagase T."/>
            <person name="Nomura N."/>
            <person name="Kikuchi H."/>
            <person name="Masuho Y."/>
            <person name="Yamashita R."/>
            <person name="Nakai K."/>
            <person name="Yada T."/>
            <person name="Nakamura Y."/>
            <person name="Ohara O."/>
            <person name="Isogai T."/>
            <person name="Sugano S."/>
        </authorList>
    </citation>
    <scope>NUCLEOTIDE SEQUENCE [LARGE SCALE MRNA] (ISOFORMS 1; 2; 3 AND 4)</scope>
    <source>
        <tissue>Amygdala</tissue>
        <tissue>Pericardium</tissue>
        <tissue>Umbilical cord blood</tissue>
    </source>
</reference>
<reference key="4">
    <citation type="journal article" date="2006" name="Nature">
        <title>The DNA sequence, annotation and analysis of human chromosome 3.</title>
        <authorList>
            <person name="Muzny D.M."/>
            <person name="Scherer S.E."/>
            <person name="Kaul R."/>
            <person name="Wang J."/>
            <person name="Yu J."/>
            <person name="Sudbrak R."/>
            <person name="Buhay C.J."/>
            <person name="Chen R."/>
            <person name="Cree A."/>
            <person name="Ding Y."/>
            <person name="Dugan-Rocha S."/>
            <person name="Gill R."/>
            <person name="Gunaratne P."/>
            <person name="Harris R.A."/>
            <person name="Hawes A.C."/>
            <person name="Hernandez J."/>
            <person name="Hodgson A.V."/>
            <person name="Hume J."/>
            <person name="Jackson A."/>
            <person name="Khan Z.M."/>
            <person name="Kovar-Smith C."/>
            <person name="Lewis L.R."/>
            <person name="Lozado R.J."/>
            <person name="Metzker M.L."/>
            <person name="Milosavljevic A."/>
            <person name="Miner G.R."/>
            <person name="Morgan M.B."/>
            <person name="Nazareth L.V."/>
            <person name="Scott G."/>
            <person name="Sodergren E."/>
            <person name="Song X.-Z."/>
            <person name="Steffen D."/>
            <person name="Wei S."/>
            <person name="Wheeler D.A."/>
            <person name="Wright M.W."/>
            <person name="Worley K.C."/>
            <person name="Yuan Y."/>
            <person name="Zhang Z."/>
            <person name="Adams C.Q."/>
            <person name="Ansari-Lari M.A."/>
            <person name="Ayele M."/>
            <person name="Brown M.J."/>
            <person name="Chen G."/>
            <person name="Chen Z."/>
            <person name="Clendenning J."/>
            <person name="Clerc-Blankenburg K.P."/>
            <person name="Chen R."/>
            <person name="Chen Z."/>
            <person name="Davis C."/>
            <person name="Delgado O."/>
            <person name="Dinh H.H."/>
            <person name="Dong W."/>
            <person name="Draper H."/>
            <person name="Ernst S."/>
            <person name="Fu G."/>
            <person name="Gonzalez-Garay M.L."/>
            <person name="Garcia D.K."/>
            <person name="Gillett W."/>
            <person name="Gu J."/>
            <person name="Hao B."/>
            <person name="Haugen E."/>
            <person name="Havlak P."/>
            <person name="He X."/>
            <person name="Hennig S."/>
            <person name="Hu S."/>
            <person name="Huang W."/>
            <person name="Jackson L.R."/>
            <person name="Jacob L.S."/>
            <person name="Kelly S.H."/>
            <person name="Kube M."/>
            <person name="Levy R."/>
            <person name="Li Z."/>
            <person name="Liu B."/>
            <person name="Liu J."/>
            <person name="Liu W."/>
            <person name="Lu J."/>
            <person name="Maheshwari M."/>
            <person name="Nguyen B.-V."/>
            <person name="Okwuonu G.O."/>
            <person name="Palmeiri A."/>
            <person name="Pasternak S."/>
            <person name="Perez L.M."/>
            <person name="Phelps K.A."/>
            <person name="Plopper F.J."/>
            <person name="Qiang B."/>
            <person name="Raymond C."/>
            <person name="Rodriguez R."/>
            <person name="Saenphimmachak C."/>
            <person name="Santibanez J."/>
            <person name="Shen H."/>
            <person name="Shen Y."/>
            <person name="Subramanian S."/>
            <person name="Tabor P.E."/>
            <person name="Verduzco D."/>
            <person name="Waldron L."/>
            <person name="Wang J."/>
            <person name="Wang J."/>
            <person name="Wang Q."/>
            <person name="Williams G.A."/>
            <person name="Wong G.K.-S."/>
            <person name="Yao Z."/>
            <person name="Zhang J."/>
            <person name="Zhang X."/>
            <person name="Zhao G."/>
            <person name="Zhou J."/>
            <person name="Zhou Y."/>
            <person name="Nelson D."/>
            <person name="Lehrach H."/>
            <person name="Reinhardt R."/>
            <person name="Naylor S.L."/>
            <person name="Yang H."/>
            <person name="Olson M."/>
            <person name="Weinstock G."/>
            <person name="Gibbs R.A."/>
        </authorList>
    </citation>
    <scope>NUCLEOTIDE SEQUENCE [LARGE SCALE GENOMIC DNA]</scope>
</reference>
<reference key="5">
    <citation type="submission" date="2005-07" db="EMBL/GenBank/DDBJ databases">
        <authorList>
            <person name="Mural R.J."/>
            <person name="Istrail S."/>
            <person name="Sutton G.G."/>
            <person name="Florea L."/>
            <person name="Halpern A.L."/>
            <person name="Mobarry C.M."/>
            <person name="Lippert R."/>
            <person name="Walenz B."/>
            <person name="Shatkay H."/>
            <person name="Dew I."/>
            <person name="Miller J.R."/>
            <person name="Flanigan M.J."/>
            <person name="Edwards N.J."/>
            <person name="Bolanos R."/>
            <person name="Fasulo D."/>
            <person name="Halldorsson B.V."/>
            <person name="Hannenhalli S."/>
            <person name="Turner R."/>
            <person name="Yooseph S."/>
            <person name="Lu F."/>
            <person name="Nusskern D.R."/>
            <person name="Shue B.C."/>
            <person name="Zheng X.H."/>
            <person name="Zhong F."/>
            <person name="Delcher A.L."/>
            <person name="Huson D.H."/>
            <person name="Kravitz S.A."/>
            <person name="Mouchard L."/>
            <person name="Reinert K."/>
            <person name="Remington K.A."/>
            <person name="Clark A.G."/>
            <person name="Waterman M.S."/>
            <person name="Eichler E.E."/>
            <person name="Adams M.D."/>
            <person name="Hunkapiller M.W."/>
            <person name="Myers E.W."/>
            <person name="Venter J.C."/>
        </authorList>
    </citation>
    <scope>NUCLEOTIDE SEQUENCE [LARGE SCALE GENOMIC DNA]</scope>
</reference>
<reference key="6">
    <citation type="journal article" date="2004" name="Genome Res.">
        <title>The status, quality, and expansion of the NIH full-length cDNA project: the Mammalian Gene Collection (MGC).</title>
        <authorList>
            <consortium name="The MGC Project Team"/>
        </authorList>
    </citation>
    <scope>NUCLEOTIDE SEQUENCE [LARGE SCALE MRNA] (ISOFORM 1)</scope>
    <source>
        <tissue>Kidney</tissue>
    </source>
</reference>
<reference key="7">
    <citation type="journal article" date="2005" name="J. Proteome Res.">
        <title>Human plasma N-glycoproteome analysis by immunoaffinity subtraction, hydrazide chemistry, and mass spectrometry.</title>
        <authorList>
            <person name="Liu T."/>
            <person name="Qian W.-J."/>
            <person name="Gritsenko M.A."/>
            <person name="Camp D.G. II"/>
            <person name="Monroe M.E."/>
            <person name="Moore R.J."/>
            <person name="Smith R.D."/>
        </authorList>
    </citation>
    <scope>GLYCOSYLATION [LARGE SCALE ANALYSIS] AT ASN-119; ASN-150; ASN-203; ASN-349 AND ASN-402</scope>
    <source>
        <tissue>Plasma</tissue>
    </source>
</reference>
<reference key="8">
    <citation type="journal article" date="2009" name="J. Proteome Res.">
        <title>Glycoproteomics analysis of human liver tissue by combination of multiple enzyme digestion and hydrazide chemistry.</title>
        <authorList>
            <person name="Chen R."/>
            <person name="Jiang X."/>
            <person name="Sun D."/>
            <person name="Han G."/>
            <person name="Wang F."/>
            <person name="Ye M."/>
            <person name="Wang L."/>
            <person name="Zou H."/>
        </authorList>
    </citation>
    <scope>GLYCOSYLATION [LARGE SCALE ANALYSIS] AT ASN-119; ASN-150; ASN-349 AND ASN-402</scope>
    <source>
        <tissue>Liver</tissue>
    </source>
</reference>
<reference key="9">
    <citation type="journal article" date="2009" name="Mol. Cell. Proteomics">
        <title>A strategy for precise and large scale identification of core fucosylated glycoproteins.</title>
        <authorList>
            <person name="Jia W."/>
            <person name="Lu Z."/>
            <person name="Fu Y."/>
            <person name="Wang H.P."/>
            <person name="Wang L.H."/>
            <person name="Chi H."/>
            <person name="Yuan Z.F."/>
            <person name="Zheng Z.B."/>
            <person name="Song L.N."/>
            <person name="Han H.H."/>
            <person name="Liang Y.M."/>
            <person name="Wang J.L."/>
            <person name="Cai Y."/>
            <person name="Zhang Y.K."/>
            <person name="Deng Y.L."/>
            <person name="Ying W.T."/>
            <person name="He S.M."/>
            <person name="Qian X.H."/>
        </authorList>
    </citation>
    <scope>GLYCOSYLATION AT ASN-150</scope>
</reference>
<reference key="10">
    <citation type="journal article" date="1997" name="Hum. Genet.">
        <title>Arg538 to Cys mutation in a CpG dinucleotide of the human biotinidase gene is the second most common cause of profound biotinidase deficiency in symptomatic children.</title>
        <authorList>
            <person name="Pomponio R.J."/>
            <person name="Norrgard K.J."/>
            <person name="Hymes J."/>
            <person name="Reynolds T.R."/>
            <person name="Buck G.A."/>
            <person name="Baumgartner R."/>
            <person name="Suormala T."/>
            <person name="Wolf B."/>
        </authorList>
    </citation>
    <scope>VARIANT BTD DEFICIENCY CYS-538</scope>
    <scope>CHARACTERIZATION OF VARIANT BTD DEFICIENCY CYS-538</scope>
    <scope>FUNCTION</scope>
    <scope>SUBCELLULAR LOCATION</scope>
</reference>
<reference key="11">
    <citation type="journal article" date="1998" name="Hum. Genet.">
        <title>Partial biotinidase deficiency is usually due to the D444H mutation in the biotinidase gene.</title>
        <authorList>
            <person name="Swango K.L."/>
            <person name="Demirkol M."/>
            <person name="Huener G."/>
            <person name="Pronicka E."/>
            <person name="Sykut-Cegielska J."/>
            <person name="Schulze A."/>
            <person name="Mayatepek E."/>
            <person name="Wolf B."/>
        </authorList>
    </citation>
    <scope>VARIANTS BTD DEFICIENCY VAL-128; THR-171; TYR-228; ARG-323; HIS-444; ASP-451; HIS-456; MET-532 AND CYS-538</scope>
    <scope>CHARACTERIZATION OF VARIANT BTD DEFICIENCY HIS-444</scope>
    <scope>CATALYTIC ACTIVITY</scope>
    <scope>FUNCTION</scope>
    <scope>SUBCELLULAR LOCATION</scope>
</reference>
<reference key="12">
    <citation type="journal article" date="1998" name="Hum. Mutat.">
        <title>Double mutation (A171T and D444H) is a common cause of profound biotinidase deficiency in children ascertained by newborn screening in the United States.</title>
        <authorList>
            <person name="Norrgard K.J."/>
            <person name="Pomponio R.J."/>
            <person name="Swango K.L."/>
            <person name="Hymes J."/>
            <person name="Reynolds T."/>
            <person name="Buck G.A."/>
            <person name="Wolf B."/>
        </authorList>
    </citation>
    <scope>VARIANTS BTD DEFICIENCY THR-171 AND HIS-444</scope>
</reference>
<gene>
    <name evidence="13" type="primary">BTD</name>
</gene>
<proteinExistence type="evidence at protein level"/>
<sequence length="543" mass="61133">MAHAHIQGGRRAKSRFVVCIMSGARSKLALFLCGCYVVALGAHTGEESVADHHEAEYYVAAVYEHPSILSLNPLALISRQEALELMNQNLDIYEQQVMTAAQKDVQIIVFPEDGIHGFNFTRTSIYPFLDFMPSPQVVRWNPCLEPHRFNDTEVLQRLSCMAIRGDMFLVANLGTKEPCHSSDPRCPKDGRYQFNTNVVFSNNGTLVDRYRKHNLYFEAAFDVPLKVDLITFDTPFAGRFGIFTCFDILFFDPAIRVLRDYKVKHVVYPTAWMNQLPLLAAIEIQKAFAVAFGINVLAANVHHPVLGMTGSGIHTPLESFWYHDMENPKSHLIIAQVAKNPVGLIGAENATGETDPSHSKFLKILSGDPYCEKDAQEVHCDEATKWNVNAPPTFHSEMMYDNFTLVPVWGKEGYLHVCSNGLCCYLLYERPTLSKELYALGVFDGLHTVHGTYYIQVCALVRCGGLGFDTCGQEITEATGIFEFHLWGNFSTSYIFPLFLTSGMTLEVPDQLGWENDHYFLRKSRLSSGLVTAALYGRLYERD</sequence>
<dbReference type="EC" id="3.5.1.12" evidence="11 12"/>
<dbReference type="EMBL" id="U03274">
    <property type="protein sequence ID" value="AAC04318.1"/>
    <property type="molecule type" value="mRNA"/>
</dbReference>
<dbReference type="EMBL" id="AF018631">
    <property type="protein sequence ID" value="AAC21679.1"/>
    <property type="molecule type" value="Genomic_DNA"/>
</dbReference>
<dbReference type="EMBL" id="AF018630">
    <property type="protein sequence ID" value="AAC21679.1"/>
    <property type="status" value="JOINED"/>
    <property type="molecule type" value="Genomic_DNA"/>
</dbReference>
<dbReference type="EMBL" id="AK294301">
    <property type="protein sequence ID" value="BAG57582.1"/>
    <property type="molecule type" value="mRNA"/>
</dbReference>
<dbReference type="EMBL" id="AK297033">
    <property type="protein sequence ID" value="BAG59561.1"/>
    <property type="molecule type" value="mRNA"/>
</dbReference>
<dbReference type="EMBL" id="AK301838">
    <property type="protein sequence ID" value="BAH13565.1"/>
    <property type="molecule type" value="mRNA"/>
</dbReference>
<dbReference type="EMBL" id="AK313252">
    <property type="protein sequence ID" value="BAG36062.1"/>
    <property type="molecule type" value="mRNA"/>
</dbReference>
<dbReference type="EMBL" id="AC027129">
    <property type="status" value="NOT_ANNOTATED_CDS"/>
    <property type="molecule type" value="Genomic_DNA"/>
</dbReference>
<dbReference type="EMBL" id="CH471055">
    <property type="protein sequence ID" value="EAW64254.1"/>
    <property type="molecule type" value="Genomic_DNA"/>
</dbReference>
<dbReference type="EMBL" id="BC012099">
    <property type="protein sequence ID" value="AAH12099.1"/>
    <property type="molecule type" value="mRNA"/>
</dbReference>
<dbReference type="CCDS" id="CCDS63565.1">
    <molecule id="P43251-4"/>
</dbReference>
<dbReference type="PIR" id="A54362">
    <property type="entry name" value="A54362"/>
</dbReference>
<dbReference type="RefSeq" id="NP_000051.1">
    <property type="nucleotide sequence ID" value="NM_000060.4"/>
</dbReference>
<dbReference type="RefSeq" id="NP_001268652.2">
    <molecule id="P43251-4"/>
    <property type="nucleotide sequence ID" value="NM_001281723.4"/>
</dbReference>
<dbReference type="RefSeq" id="NP_001268653.2">
    <molecule id="P43251-4"/>
    <property type="nucleotide sequence ID" value="NM_001281724.3"/>
</dbReference>
<dbReference type="RefSeq" id="NP_001268654.1">
    <molecule id="P43251-4"/>
    <property type="nucleotide sequence ID" value="NM_001281725.3"/>
</dbReference>
<dbReference type="RefSeq" id="NP_001310511.1">
    <molecule id="P43251-4"/>
    <property type="nucleotide sequence ID" value="NM_001323582.2"/>
</dbReference>
<dbReference type="RefSeq" id="NP_001357587.1">
    <molecule id="P43251-4"/>
    <property type="nucleotide sequence ID" value="NM_001370658.1"/>
</dbReference>
<dbReference type="RefSeq" id="NP_001394293.1">
    <molecule id="P43251-4"/>
    <property type="nucleotide sequence ID" value="NM_001407364.1"/>
</dbReference>
<dbReference type="RefSeq" id="NP_001394294.1">
    <molecule id="P43251-4"/>
    <property type="nucleotide sequence ID" value="NM_001407365.1"/>
</dbReference>
<dbReference type="RefSeq" id="NP_001394295.1">
    <molecule id="P43251-4"/>
    <property type="nucleotide sequence ID" value="NM_001407366.1"/>
</dbReference>
<dbReference type="RefSeq" id="NP_001394296.1">
    <molecule id="P43251-4"/>
    <property type="nucleotide sequence ID" value="NM_001407367.1"/>
</dbReference>
<dbReference type="RefSeq" id="NP_001394297.1">
    <molecule id="P43251-4"/>
    <property type="nucleotide sequence ID" value="NM_001407368.1"/>
</dbReference>
<dbReference type="RefSeq" id="NP_001394298.1">
    <molecule id="P43251-4"/>
    <property type="nucleotide sequence ID" value="NM_001407369.1"/>
</dbReference>
<dbReference type="RefSeq" id="NP_001394299.1">
    <molecule id="P43251-4"/>
    <property type="nucleotide sequence ID" value="NM_001407370.1"/>
</dbReference>
<dbReference type="RefSeq" id="NP_001394300.1">
    <molecule id="P43251-4"/>
    <property type="nucleotide sequence ID" value="NM_001407371.1"/>
</dbReference>
<dbReference type="RefSeq" id="NP_001394301.1">
    <molecule id="P43251-4"/>
    <property type="nucleotide sequence ID" value="NM_001407372.1"/>
</dbReference>
<dbReference type="RefSeq" id="NP_001394302.1">
    <molecule id="P43251-4"/>
    <property type="nucleotide sequence ID" value="NM_001407373.1"/>
</dbReference>
<dbReference type="RefSeq" id="NP_001394303.1">
    <molecule id="P43251-4"/>
    <property type="nucleotide sequence ID" value="NM_001407374.1"/>
</dbReference>
<dbReference type="RefSeq" id="NP_001394304.1">
    <molecule id="P43251-4"/>
    <property type="nucleotide sequence ID" value="NM_001407375.1"/>
</dbReference>
<dbReference type="RefSeq" id="NP_001394305.1">
    <molecule id="P43251-4"/>
    <property type="nucleotide sequence ID" value="NM_001407376.1"/>
</dbReference>
<dbReference type="RefSeq" id="NP_001394306.1">
    <molecule id="P43251-4"/>
    <property type="nucleotide sequence ID" value="NM_001407377.1"/>
</dbReference>
<dbReference type="RefSeq" id="NP_001394307.1">
    <molecule id="P43251-4"/>
    <property type="nucleotide sequence ID" value="NM_001407378.1"/>
</dbReference>
<dbReference type="RefSeq" id="XP_011532343.1">
    <property type="nucleotide sequence ID" value="XM_011534041.2"/>
</dbReference>
<dbReference type="RefSeq" id="XP_016862577.1">
    <property type="nucleotide sequence ID" value="XM_017007088.1"/>
</dbReference>
<dbReference type="SMR" id="P43251"/>
<dbReference type="BioGRID" id="107151">
    <property type="interactions" value="36"/>
</dbReference>
<dbReference type="FunCoup" id="P43251">
    <property type="interactions" value="267"/>
</dbReference>
<dbReference type="IntAct" id="P43251">
    <property type="interactions" value="17"/>
</dbReference>
<dbReference type="STRING" id="9606.ENSP00000500193"/>
<dbReference type="BindingDB" id="P43251"/>
<dbReference type="ChEMBL" id="CHEMBL4802066"/>
<dbReference type="GlyConnect" id="1043">
    <property type="glycosylation" value="15 N-Linked glycans (5 sites)"/>
</dbReference>
<dbReference type="GlyCosmos" id="P43251">
    <property type="glycosylation" value="6 sites, 21 glycans"/>
</dbReference>
<dbReference type="GlyGen" id="P43251">
    <property type="glycosylation" value="7 sites, 62 N-linked glycans (5 sites), 1 O-linked glycan (1 site)"/>
</dbReference>
<dbReference type="iPTMnet" id="P43251"/>
<dbReference type="PhosphoSitePlus" id="P43251"/>
<dbReference type="SwissPalm" id="P43251"/>
<dbReference type="BioMuta" id="BTD"/>
<dbReference type="DMDM" id="226693503"/>
<dbReference type="CPTAC" id="CPTAC-655"/>
<dbReference type="CPTAC" id="non-CPTAC-2634"/>
<dbReference type="CPTAC" id="non-CPTAC-2635"/>
<dbReference type="jPOST" id="P43251"/>
<dbReference type="MassIVE" id="P43251"/>
<dbReference type="PaxDb" id="9606-ENSP00000400995"/>
<dbReference type="PeptideAtlas" id="P43251"/>
<dbReference type="ProteomicsDB" id="1193"/>
<dbReference type="ProteomicsDB" id="29669"/>
<dbReference type="ProteomicsDB" id="4540"/>
<dbReference type="ProteomicsDB" id="55605">
    <molecule id="P43251-1"/>
</dbReference>
<dbReference type="Pumba" id="P43251"/>
<dbReference type="Antibodypedia" id="26848">
    <property type="antibodies" value="222 antibodies from 27 providers"/>
</dbReference>
<dbReference type="DNASU" id="686"/>
<dbReference type="Ensembl" id="ENST00000303498.10">
    <molecule id="P43251-4"/>
    <property type="protein sequence ID" value="ENSP00000306477.6"/>
    <property type="gene ID" value="ENSG00000169814.18"/>
</dbReference>
<dbReference type="Ensembl" id="ENST00000427382.2">
    <molecule id="P43251-4"/>
    <property type="protein sequence ID" value="ENSP00000397113.2"/>
    <property type="gene ID" value="ENSG00000169814.18"/>
</dbReference>
<dbReference type="Ensembl" id="ENST00000436193.6">
    <molecule id="P43251-4"/>
    <property type="protein sequence ID" value="ENSP00000394277.2"/>
    <property type="gene ID" value="ENSG00000169814.18"/>
</dbReference>
<dbReference type="Ensembl" id="ENST00000437172.6">
    <molecule id="P43251-4"/>
    <property type="protein sequence ID" value="ENSP00000400995.2"/>
    <property type="gene ID" value="ENSG00000169814.18"/>
</dbReference>
<dbReference type="Ensembl" id="ENST00000449107.7">
    <molecule id="P43251-4"/>
    <property type="protein sequence ID" value="ENSP00000388212.2"/>
    <property type="gene ID" value="ENSG00000169814.18"/>
</dbReference>
<dbReference type="Ensembl" id="ENST00000643237.3">
    <molecule id="P43251-4"/>
    <property type="protein sequence ID" value="ENSP00000495254.2"/>
    <property type="gene ID" value="ENSG00000169814.18"/>
</dbReference>
<dbReference type="Ensembl" id="ENST00000646371.1">
    <molecule id="P43251-4"/>
    <property type="protein sequence ID" value="ENSP00000495866.1"/>
    <property type="gene ID" value="ENSG00000169814.18"/>
</dbReference>
<dbReference type="GeneID" id="686"/>
<dbReference type="KEGG" id="hsa:686"/>
<dbReference type="MANE-Select" id="ENST00000643237.3">
    <molecule id="P43251-4"/>
    <property type="protein sequence ID" value="ENSP00000495254.2"/>
    <property type="RefSeq nucleotide sequence ID" value="NM_001370658.1"/>
    <property type="RefSeq protein sequence ID" value="NP_001357587.1"/>
</dbReference>
<dbReference type="UCSC" id="uc003cah.5">
    <molecule id="P43251-1"/>
    <property type="organism name" value="human"/>
</dbReference>
<dbReference type="AGR" id="HGNC:1122"/>
<dbReference type="CTD" id="686"/>
<dbReference type="DisGeNET" id="686"/>
<dbReference type="GeneCards" id="BTD"/>
<dbReference type="GeneReviews" id="BTD"/>
<dbReference type="HGNC" id="HGNC:1122">
    <property type="gene designation" value="BTD"/>
</dbReference>
<dbReference type="HPA" id="ENSG00000169814">
    <property type="expression patterns" value="Tissue enhanced (liver)"/>
</dbReference>
<dbReference type="MalaCards" id="BTD"/>
<dbReference type="MIM" id="253260">
    <property type="type" value="phenotype"/>
</dbReference>
<dbReference type="MIM" id="609019">
    <property type="type" value="gene"/>
</dbReference>
<dbReference type="neXtProt" id="NX_P43251"/>
<dbReference type="OpenTargets" id="ENSG00000169814"/>
<dbReference type="Orphanet" id="79241">
    <property type="disease" value="Biotinidase deficiency"/>
</dbReference>
<dbReference type="PharmGKB" id="PA25443"/>
<dbReference type="VEuPathDB" id="HostDB:ENSG00000169814"/>
<dbReference type="eggNOG" id="KOG0806">
    <property type="taxonomic scope" value="Eukaryota"/>
</dbReference>
<dbReference type="GeneTree" id="ENSGT00390000013823"/>
<dbReference type="HOGENOM" id="CLU_033209_0_0_1"/>
<dbReference type="InParanoid" id="P43251"/>
<dbReference type="OrthoDB" id="10250282at2759"/>
<dbReference type="PAN-GO" id="P43251">
    <property type="GO annotations" value="1 GO annotation based on evolutionary models"/>
</dbReference>
<dbReference type="PhylomeDB" id="P43251"/>
<dbReference type="TreeFam" id="TF323645"/>
<dbReference type="BRENDA" id="3.5.1.12">
    <property type="organism ID" value="2681"/>
</dbReference>
<dbReference type="PathwayCommons" id="P43251"/>
<dbReference type="Reactome" id="R-HSA-196780">
    <property type="pathway name" value="Biotin transport and metabolism"/>
</dbReference>
<dbReference type="Reactome" id="R-HSA-3371598">
    <property type="pathway name" value="Defective BTD causes biotidinase deficiency"/>
</dbReference>
<dbReference type="SABIO-RK" id="P43251"/>
<dbReference type="SignaLink" id="P43251"/>
<dbReference type="BioGRID-ORCS" id="686">
    <property type="hits" value="13 hits in 1160 CRISPR screens"/>
</dbReference>
<dbReference type="ChiTaRS" id="BTD">
    <property type="organism name" value="human"/>
</dbReference>
<dbReference type="GenomeRNAi" id="686"/>
<dbReference type="Pharos" id="P43251">
    <property type="development level" value="Tbio"/>
</dbReference>
<dbReference type="PRO" id="PR:P43251"/>
<dbReference type="Proteomes" id="UP000005640">
    <property type="component" value="Chromosome 3"/>
</dbReference>
<dbReference type="RNAct" id="P43251">
    <property type="molecule type" value="protein"/>
</dbReference>
<dbReference type="Bgee" id="ENSG00000169814">
    <property type="expression patterns" value="Expressed in islet of Langerhans and 187 other cell types or tissues"/>
</dbReference>
<dbReference type="ExpressionAtlas" id="P43251">
    <property type="expression patterns" value="baseline and differential"/>
</dbReference>
<dbReference type="GO" id="GO:0070062">
    <property type="term" value="C:extracellular exosome"/>
    <property type="evidence" value="ECO:0007005"/>
    <property type="project" value="UniProtKB"/>
</dbReference>
<dbReference type="GO" id="GO:0005576">
    <property type="term" value="C:extracellular region"/>
    <property type="evidence" value="ECO:0000304"/>
    <property type="project" value="Reactome"/>
</dbReference>
<dbReference type="GO" id="GO:0005615">
    <property type="term" value="C:extracellular space"/>
    <property type="evidence" value="ECO:0007005"/>
    <property type="project" value="UniProtKB"/>
</dbReference>
<dbReference type="GO" id="GO:0005759">
    <property type="term" value="C:mitochondrial matrix"/>
    <property type="evidence" value="ECO:0000304"/>
    <property type="project" value="Reactome"/>
</dbReference>
<dbReference type="GO" id="GO:0047708">
    <property type="term" value="F:biotinidase activity"/>
    <property type="evidence" value="ECO:0000304"/>
    <property type="project" value="Reactome"/>
</dbReference>
<dbReference type="GO" id="GO:0006768">
    <property type="term" value="P:biotin metabolic process"/>
    <property type="evidence" value="ECO:0000318"/>
    <property type="project" value="GO_Central"/>
</dbReference>
<dbReference type="GO" id="GO:0007417">
    <property type="term" value="P:central nervous system development"/>
    <property type="evidence" value="ECO:0000304"/>
    <property type="project" value="ProtInc"/>
</dbReference>
<dbReference type="CDD" id="cd07567">
    <property type="entry name" value="biotinidase_like"/>
    <property type="match status" value="1"/>
</dbReference>
<dbReference type="FunFam" id="3.60.110.10:FF:000001">
    <property type="entry name" value="biotinidase isoform X1"/>
    <property type="match status" value="1"/>
</dbReference>
<dbReference type="Gene3D" id="3.60.110.10">
    <property type="entry name" value="Carbon-nitrogen hydrolase"/>
    <property type="match status" value="1"/>
</dbReference>
<dbReference type="InterPro" id="IPR012101">
    <property type="entry name" value="Biotinidase-like_euk"/>
</dbReference>
<dbReference type="InterPro" id="IPR040154">
    <property type="entry name" value="Biotinidase/VNN"/>
</dbReference>
<dbReference type="InterPro" id="IPR003010">
    <property type="entry name" value="C-N_Hydrolase"/>
</dbReference>
<dbReference type="InterPro" id="IPR036526">
    <property type="entry name" value="C-N_Hydrolase_sf"/>
</dbReference>
<dbReference type="InterPro" id="IPR043957">
    <property type="entry name" value="Vanin_C"/>
</dbReference>
<dbReference type="PANTHER" id="PTHR10609:SF14">
    <property type="entry name" value="BIOTINIDASE"/>
    <property type="match status" value="1"/>
</dbReference>
<dbReference type="PANTHER" id="PTHR10609">
    <property type="entry name" value="BIOTINIDASE-RELATED"/>
    <property type="match status" value="1"/>
</dbReference>
<dbReference type="Pfam" id="PF00795">
    <property type="entry name" value="CN_hydrolase"/>
    <property type="match status" value="1"/>
</dbReference>
<dbReference type="Pfam" id="PF19018">
    <property type="entry name" value="Vanin_C"/>
    <property type="match status" value="1"/>
</dbReference>
<dbReference type="PIRSF" id="PIRSF011861">
    <property type="entry name" value="Biotinidase"/>
    <property type="match status" value="1"/>
</dbReference>
<dbReference type="SUPFAM" id="SSF56317">
    <property type="entry name" value="Carbon-nitrogen hydrolase"/>
    <property type="match status" value="1"/>
</dbReference>
<dbReference type="PROSITE" id="PS50263">
    <property type="entry name" value="CN_HYDROLASE"/>
    <property type="match status" value="1"/>
</dbReference>
<comment type="function">
    <text evidence="11 12">Catalytic release of biotin from biocytin, the product of biotin-dependent carboxylases degradation.</text>
</comment>
<comment type="catalytic activity">
    <reaction evidence="11 12">
        <text>biocytin + H2O = biotin + L-lysine</text>
        <dbReference type="Rhea" id="RHEA:77171"/>
        <dbReference type="ChEBI" id="CHEBI:15377"/>
        <dbReference type="ChEBI" id="CHEBI:32551"/>
        <dbReference type="ChEBI" id="CHEBI:57586"/>
        <dbReference type="ChEBI" id="CHEBI:195545"/>
        <dbReference type="EC" id="3.5.1.12"/>
    </reaction>
</comment>
<comment type="catalytic activity">
    <reaction evidence="11 12">
        <text>biotin amide + H2O = biotin + NH4(+)</text>
        <dbReference type="Rhea" id="RHEA:13081"/>
        <dbReference type="ChEBI" id="CHEBI:15377"/>
        <dbReference type="ChEBI" id="CHEBI:16615"/>
        <dbReference type="ChEBI" id="CHEBI:28938"/>
        <dbReference type="ChEBI" id="CHEBI:57586"/>
    </reaction>
    <physiologicalReaction direction="left-to-right" evidence="11 12">
        <dbReference type="Rhea" id="RHEA:13082"/>
    </physiologicalReaction>
</comment>
<comment type="interaction">
    <interactant intactId="EBI-2907478">
        <id>P43251</id>
    </interactant>
    <interactant intactId="EBI-355634">
        <id>O94832</id>
        <label>MYO1D</label>
    </interactant>
    <organismsDiffer>false</organismsDiffer>
    <experiments>2</experiments>
</comment>
<comment type="subcellular location">
    <subcellularLocation>
        <location evidence="11 12">Secreted</location>
        <location evidence="11 12">Extracellular space</location>
    </subcellularLocation>
</comment>
<comment type="alternative products">
    <event type="alternative splicing"/>
    <isoform>
        <id>P43251-1</id>
        <name>1</name>
        <sequence type="displayed"/>
    </isoform>
    <isoform>
        <id>P43251-2</id>
        <name>2</name>
        <sequence type="described" ref="VSP_054925"/>
    </isoform>
    <isoform>
        <id>P43251-3</id>
        <name>3</name>
        <sequence type="described" ref="VSP_054926"/>
    </isoform>
    <isoform>
        <id>P43251-4</id>
        <name>4</name>
        <sequence type="described" ref="VSP_055921"/>
    </isoform>
</comment>
<comment type="disease" evidence="3 7 8">
    <disease id="DI-00189">
        <name>Biotinidase deficiency</name>
        <acronym>BTD deficiency</acronym>
        <description>A juvenile form of multiple carboxylase deficiency, an autosomal recessive disorder of biotin metabolism, characterized by ketoacidosis, hyperammonemia, excretion of abnormal organic acid metabolites, and dermatitis. Biotinidase deficiency is characterized by seizures, hypotonia, skin rash, alopecia, ataxia, hearing loss, and optic atrophy. If untreated, symptoms usually become progressively worse, and coma and death may occur.</description>
        <dbReference type="MIM" id="253260"/>
    </disease>
    <text>The disease is caused by variants affecting the gene represented in this entry.</text>
</comment>
<comment type="similarity">
    <text evidence="10">Belongs to the carbon-nitrogen hydrolase superfamily. BTD/VNN family.</text>
</comment>
<comment type="caution">
    <text evidence="10">It is uncertain whether Met-1 or Met-21 is the initiator.</text>
</comment>
<keyword id="KW-0025">Alternative splicing</keyword>
<keyword id="KW-0903">Direct protein sequencing</keyword>
<keyword id="KW-0225">Disease variant</keyword>
<keyword id="KW-0325">Glycoprotein</keyword>
<keyword id="KW-0378">Hydrolase</keyword>
<keyword id="KW-1267">Proteomics identification</keyword>
<keyword id="KW-1185">Reference proteome</keyword>
<keyword id="KW-0964">Secreted</keyword>
<keyword id="KW-0732">Signal</keyword>